<keyword id="KW-0131">Cell cycle</keyword>
<keyword id="KW-0132">Cell division</keyword>
<keyword id="KW-0175">Coiled coil</keyword>
<keyword id="KW-0221">Differentiation</keyword>
<keyword id="KW-0472">Membrane</keyword>
<keyword id="KW-1185">Reference proteome</keyword>
<keyword id="KW-0677">Repeat</keyword>
<keyword id="KW-0812">Transmembrane</keyword>
<keyword id="KW-1133">Transmembrane helix</keyword>
<gene>
    <name type="primary">podJ</name>
    <name type="ordered locus">CC_2045</name>
</gene>
<proteinExistence type="evidence at protein level"/>
<evidence type="ECO:0000255" key="1"/>
<evidence type="ECO:0000256" key="2">
    <source>
        <dbReference type="SAM" id="MobiDB-lite"/>
    </source>
</evidence>
<evidence type="ECO:0000269" key="3">
    <source>
    </source>
</evidence>
<evidence type="ECO:0000305" key="4"/>
<feature type="chain" id="PRO_0000022081" description="Localization factor PodJL">
    <location>
        <begin position="1"/>
        <end position="974"/>
    </location>
</feature>
<feature type="chain" id="PRO_0000022082" description="Localization factor PodJS">
    <location>
        <begin position="1"/>
        <end status="unknown"/>
    </location>
</feature>
<feature type="transmembrane region" description="Helical" evidence="1">
    <location>
        <begin position="642"/>
        <end position="662"/>
    </location>
</feature>
<feature type="repeat" description="Sel1-like 1">
    <location>
        <begin position="757"/>
        <end position="793"/>
    </location>
</feature>
<feature type="repeat" description="Sel1-like 2">
    <location>
        <begin position="794"/>
        <end position="829"/>
    </location>
</feature>
<feature type="repeat" description="Sel1-like 3">
    <location>
        <begin position="830"/>
        <end position="865"/>
    </location>
</feature>
<feature type="region of interest" description="Disordered" evidence="2">
    <location>
        <begin position="460"/>
        <end position="497"/>
    </location>
</feature>
<feature type="region of interest" description="Disordered" evidence="2">
    <location>
        <begin position="589"/>
        <end position="611"/>
    </location>
</feature>
<feature type="coiled-coil region" evidence="1">
    <location>
        <begin position="81"/>
        <end position="163"/>
    </location>
</feature>
<feature type="coiled-coil region" evidence="1">
    <location>
        <begin position="218"/>
        <end position="320"/>
    </location>
</feature>
<feature type="coiled-coil region" evidence="1">
    <location>
        <begin position="375"/>
        <end position="469"/>
    </location>
</feature>
<feature type="compositionally biased region" description="Low complexity" evidence="2">
    <location>
        <begin position="589"/>
        <end position="598"/>
    </location>
</feature>
<feature type="sequence conflict" description="In Ref. 2; AAC72820." evidence="4" ref="2">
    <original>SA</original>
    <variation>RP</variation>
    <location>
        <begin position="291"/>
        <end position="292"/>
    </location>
</feature>
<name>PODJ_CAUVC</name>
<protein>
    <recommendedName>
        <fullName>Localization factor PodJL</fullName>
    </recommendedName>
    <alternativeName>
        <fullName>Polar organelle development protein</fullName>
    </alternativeName>
    <component>
        <recommendedName>
            <fullName>Localization factor PodJS</fullName>
        </recommendedName>
    </component>
</protein>
<reference key="1">
    <citation type="journal article" date="2001" name="Proc. Natl. Acad. Sci. U.S.A.">
        <title>Complete genome sequence of Caulobacter crescentus.</title>
        <authorList>
            <person name="Nierman W.C."/>
            <person name="Feldblyum T.V."/>
            <person name="Laub M.T."/>
            <person name="Paulsen I.T."/>
            <person name="Nelson K.E."/>
            <person name="Eisen J.A."/>
            <person name="Heidelberg J.F."/>
            <person name="Alley M.R.K."/>
            <person name="Ohta N."/>
            <person name="Maddock J.R."/>
            <person name="Potocka I."/>
            <person name="Nelson W.C."/>
            <person name="Newton A."/>
            <person name="Stephens C."/>
            <person name="Phadke N.D."/>
            <person name="Ely B."/>
            <person name="DeBoy R.T."/>
            <person name="Dodson R.J."/>
            <person name="Durkin A.S."/>
            <person name="Gwinn M.L."/>
            <person name="Haft D.H."/>
            <person name="Kolonay J.F."/>
            <person name="Smit J."/>
            <person name="Craven M.B."/>
            <person name="Khouri H.M."/>
            <person name="Shetty J."/>
            <person name="Berry K.J."/>
            <person name="Utterback T.R."/>
            <person name="Tran K."/>
            <person name="Wolf A.M."/>
            <person name="Vamathevan J.J."/>
            <person name="Ermolaeva M.D."/>
            <person name="White O."/>
            <person name="Salzberg S.L."/>
            <person name="Venter J.C."/>
            <person name="Shapiro L."/>
            <person name="Fraser C.M."/>
        </authorList>
    </citation>
    <scope>NUCLEOTIDE SEQUENCE [LARGE SCALE GENOMIC DNA]</scope>
    <source>
        <strain>ATCC 19089 / CIP 103742 / CB 15</strain>
    </source>
</reference>
<reference key="2">
    <citation type="journal article" date="1999" name="J. Bacteriol.">
        <title>Regulation of podJ expression during the Caulobacter crescentus cell cycle.</title>
        <authorList>
            <person name="Crymes W.B. Jr."/>
            <person name="Zhang D."/>
            <person name="Ely B."/>
        </authorList>
    </citation>
    <scope>NUCLEOTIDE SEQUENCE [GENOMIC DNA] OF 7-585</scope>
    <source>
        <strain>ATCC 19089 / CIP 103742 / CB 15</strain>
    </source>
</reference>
<reference key="3">
    <citation type="journal article" date="2002" name="Proc. Natl. Acad. Sci. U.S.A.">
        <title>Identification of a localization factor for the polar positioning of bacterial structural and regulatory proteins.</title>
        <authorList>
            <person name="Viollier P.H."/>
            <person name="Sternheim N."/>
            <person name="Shapiro L."/>
        </authorList>
    </citation>
    <scope>SEQUENCE REVISION</scope>
    <scope>FUNCTION</scope>
    <source>
        <strain>ATCC 19089 / CIP 103742 / CB 15</strain>
    </source>
</reference>
<reference key="4">
    <citation type="journal article" date="2005" name="Mol. Microbiol.">
        <title>A membrane metalloprotease participates in the sequential degradation of a Caulobacter polarity determinant.</title>
        <authorList>
            <person name="Chen J.C."/>
            <person name="Viollier P.H."/>
            <person name="Shapiro L."/>
        </authorList>
    </citation>
    <scope>CHARACTERIZATION</scope>
</reference>
<sequence>MTAASPWSVKGIDPKAREVAKDLARRSGMTLGEWLNRMIIEGDGQTADPRLAGDDVPNRAYLEIVKDDAPPRIEIAEHPADEVGRVALALDRLTQRIEAAEGRNAAAITGIDHSVRDALTRLGASEREQIAVAARFEGAVDELKTEQARATERLRRIESEAAGPRSAEALRALEGALGKVAGHLYEGEARTREAIATLEAKLNQQSSGDPSALVEAVVARLGERLEAAETRTSDALRELGASFQALDQRLGAVETANPATGVQEGLDSLAATLTQKMEAARLEMAAKLRESADGRFDRMERKLGEMAAHVQAAEQRSAQAIERMGREIVGVADAFNRRVHAAESRNASAIEQVGGEVARIAASVEHKLNRADSVQAQALEKLGGEIARITEKLAERIGSAERRNALAIDDVGEQVARVTERLNQRHERSSQELVDRIRQSEERTLRMLEEAREKIDSRLSEAQRKLEAAPPSPPPAQAPAPVATAQRPVPPAASPFEDNYFSQAASFSTSEDEADAFDAPPAPARSFEVAEFPAAEPEEPAFAHDDYAIADGFEPESPRYEVEPEVSDFAPAEPSRPMSTRDIIEQARAAARAAAASEGKGGKAKSAKKEKASKASGSLFSGFGGFSTKKSKARLGATVTTALVVFAAAGALGAGVGGLLLLNTDDGNNSPSRVAQAIAGRKADVEVNGPEADTTPGAPRAAVALTTGKVVPAEVEAPAAPPTNEAKALFEDAVRKIESGDRSGVELLKRAANGGYPAAQFYLSKMYEGGKNGVKVDMAEARRWSERAANGGDPRAMHNLALYYFKGEGGPRNSTTAASWFRKAADMGLVDSQFNLAQLYESGLGVSQNPAEAYKWYVIAGRAGDSTARGRATALRSQLTAEAQQTADRSALAFRPQTQVQTASLSSAAPAAANANLGVAQRVLSQLGYYQGPRDGVSSPALRMAIAAYQRDQGLPPTGSVDAETLNRLSVYAR</sequence>
<organism>
    <name type="scientific">Caulobacter vibrioides (strain ATCC 19089 / CIP 103742 / CB 15)</name>
    <name type="common">Caulobacter crescentus</name>
    <dbReference type="NCBI Taxonomy" id="190650"/>
    <lineage>
        <taxon>Bacteria</taxon>
        <taxon>Pseudomonadati</taxon>
        <taxon>Pseudomonadota</taxon>
        <taxon>Alphaproteobacteria</taxon>
        <taxon>Caulobacterales</taxon>
        <taxon>Caulobacteraceae</taxon>
        <taxon>Caulobacter</taxon>
    </lineage>
</organism>
<comment type="function">
    <text evidence="3">PodJL provides the positional information for the localization of several polar organelles (pili, adhesive holdfast and chemotactic apparatus) by recruiting structural (CpaE) and regulatory (PleC) proteins to a specific cell pole.</text>
</comment>
<comment type="subcellular location">
    <subcellularLocation>
        <location>Membrane</location>
        <topology>Single-pass membrane protein</topology>
    </subcellularLocation>
    <text>Both PodJL and PodJS localize to the swarmer pole at different stages of the cell division.</text>
</comment>
<comment type="developmental stage">
    <text>PodJS, from the previous progeny, accumulates in the swarmer cell, and is partially degraded during the swarmer-to-stalked transition by sequential proteolytic cleavages (MmpA). PodJL, from the new progeny, is synthesized in the early predivisional cell, and then is likely to be converted to PodJS by proteolytic cleavage of periplasmic domain. After cell division, PodJL disappears, while the level of PodJS increases in the swarmer cell progeny.</text>
</comment>
<comment type="PTM">
    <text>Two isoforms exist, the full-length translation product PodJL and a C-terminal truncated form PodJS. Both appear during a specific time period of the cell cycle to control different aspects of polar organelle development.</text>
</comment>
<comment type="miscellaneous">
    <text>PodJS must be degraded to preserve the asymmetry of the next cell cycle.</text>
</comment>
<comment type="sequence caution" evidence="4">
    <conflict type="frameshift">
        <sequence resource="EMBL-CDS" id="AAC72820"/>
    </conflict>
</comment>
<accession>Q9ZG88</accession>
<dbReference type="EMBL" id="AE005673">
    <property type="status" value="NOT_ANNOTATED_CDS"/>
    <property type="molecule type" value="Genomic_DNA"/>
</dbReference>
<dbReference type="EMBL" id="AF084609">
    <property type="protein sequence ID" value="AAC72820.1"/>
    <property type="status" value="ALT_FRAME"/>
    <property type="molecule type" value="Genomic_DNA"/>
</dbReference>
<dbReference type="EMBL" id="BK000536">
    <property type="protein sequence ID" value="DAA00313.1"/>
    <property type="molecule type" value="Genomic_DNA"/>
</dbReference>
<dbReference type="RefSeq" id="WP_012640394.1">
    <property type="nucleotide sequence ID" value="NC_002696.2"/>
</dbReference>
<dbReference type="SMR" id="Q9ZG88"/>
<dbReference type="BioCyc" id="CAULO:CC2045-MONOMER"/>
<dbReference type="Proteomes" id="UP000001816">
    <property type="component" value="Chromosome"/>
</dbReference>
<dbReference type="GO" id="GO:0016020">
    <property type="term" value="C:membrane"/>
    <property type="evidence" value="ECO:0007669"/>
    <property type="project" value="UniProtKB-SubCell"/>
</dbReference>
<dbReference type="GO" id="GO:0030154">
    <property type="term" value="P:cell differentiation"/>
    <property type="evidence" value="ECO:0007669"/>
    <property type="project" value="UniProtKB-KW"/>
</dbReference>
<dbReference type="GO" id="GO:0051301">
    <property type="term" value="P:cell division"/>
    <property type="evidence" value="ECO:0007669"/>
    <property type="project" value="UniProtKB-KW"/>
</dbReference>
<dbReference type="Gene3D" id="1.10.101.10">
    <property type="entry name" value="PGBD-like superfamily/PGBD"/>
    <property type="match status" value="1"/>
</dbReference>
<dbReference type="Gene3D" id="1.25.40.10">
    <property type="entry name" value="Tetratricopeptide repeat domain"/>
    <property type="match status" value="1"/>
</dbReference>
<dbReference type="InterPro" id="IPR002477">
    <property type="entry name" value="Peptidoglycan-bd-like"/>
</dbReference>
<dbReference type="InterPro" id="IPR036365">
    <property type="entry name" value="PGBD-like_sf"/>
</dbReference>
<dbReference type="InterPro" id="IPR036366">
    <property type="entry name" value="PGBDSf"/>
</dbReference>
<dbReference type="InterPro" id="IPR006597">
    <property type="entry name" value="Sel1-like"/>
</dbReference>
<dbReference type="InterPro" id="IPR050767">
    <property type="entry name" value="Sel1_AlgK"/>
</dbReference>
<dbReference type="InterPro" id="IPR011990">
    <property type="entry name" value="TPR-like_helical_dom_sf"/>
</dbReference>
<dbReference type="PANTHER" id="PTHR11102:SF160">
    <property type="entry name" value="ERAD-ASSOCIATED E3 UBIQUITIN-PROTEIN LIGASE COMPONENT HRD3"/>
    <property type="match status" value="1"/>
</dbReference>
<dbReference type="PANTHER" id="PTHR11102">
    <property type="entry name" value="SEL-1-LIKE PROTEIN"/>
    <property type="match status" value="1"/>
</dbReference>
<dbReference type="Pfam" id="PF01471">
    <property type="entry name" value="PG_binding_1"/>
    <property type="match status" value="1"/>
</dbReference>
<dbReference type="Pfam" id="PF08238">
    <property type="entry name" value="Sel1"/>
    <property type="match status" value="3"/>
</dbReference>
<dbReference type="SMART" id="SM00671">
    <property type="entry name" value="SEL1"/>
    <property type="match status" value="3"/>
</dbReference>
<dbReference type="SUPFAM" id="SSF81901">
    <property type="entry name" value="HCP-like"/>
    <property type="match status" value="1"/>
</dbReference>
<dbReference type="SUPFAM" id="SSF47090">
    <property type="entry name" value="PGBD-like"/>
    <property type="match status" value="1"/>
</dbReference>